<dbReference type="EC" id="2.3.1.-" evidence="3"/>
<dbReference type="EMBL" id="EQ973784">
    <property type="protein sequence ID" value="EEF48040.1"/>
    <property type="molecule type" value="Genomic_DNA"/>
</dbReference>
<dbReference type="RefSeq" id="XP_002514086.1">
    <property type="nucleotide sequence ID" value="XM_002514040.2"/>
</dbReference>
<dbReference type="SMR" id="B9RK42"/>
<dbReference type="FunCoup" id="B9RK42">
    <property type="interactions" value="254"/>
</dbReference>
<dbReference type="STRING" id="3988.B9RK42"/>
<dbReference type="SwissLipids" id="SLP:000001891"/>
<dbReference type="GeneID" id="8272523"/>
<dbReference type="KEGG" id="rcu:8272523"/>
<dbReference type="eggNOG" id="KOG2895">
    <property type="taxonomic scope" value="Eukaryota"/>
</dbReference>
<dbReference type="InParanoid" id="B9RK42"/>
<dbReference type="OrthoDB" id="406287at2759"/>
<dbReference type="BRENDA" id="2.3.1.B36">
    <property type="organism ID" value="1204"/>
</dbReference>
<dbReference type="Proteomes" id="UP000008311">
    <property type="component" value="Unassembled WGS sequence"/>
</dbReference>
<dbReference type="GO" id="GO:0016020">
    <property type="term" value="C:membrane"/>
    <property type="evidence" value="ECO:0007669"/>
    <property type="project" value="UniProtKB-SubCell"/>
</dbReference>
<dbReference type="GO" id="GO:0016746">
    <property type="term" value="F:acyltransferase activity"/>
    <property type="evidence" value="ECO:0007669"/>
    <property type="project" value="UniProtKB-KW"/>
</dbReference>
<dbReference type="GO" id="GO:0006656">
    <property type="term" value="P:phosphatidylcholine biosynthetic process"/>
    <property type="evidence" value="ECO:0000318"/>
    <property type="project" value="GO_Central"/>
</dbReference>
<dbReference type="InterPro" id="IPR021261">
    <property type="entry name" value="GPCAT"/>
</dbReference>
<dbReference type="PANTHER" id="PTHR31201:SF1">
    <property type="entry name" value="GLYCEROPHOSPHOCHOLINE ACYLTRANSFERASE 1"/>
    <property type="match status" value="1"/>
</dbReference>
<dbReference type="PANTHER" id="PTHR31201">
    <property type="entry name" value="OS01G0585100 PROTEIN"/>
    <property type="match status" value="1"/>
</dbReference>
<dbReference type="Pfam" id="PF10998">
    <property type="entry name" value="DUF2838"/>
    <property type="match status" value="1"/>
</dbReference>
<name>GPC1_RICCO</name>
<evidence type="ECO:0000255" key="1"/>
<evidence type="ECO:0000256" key="2">
    <source>
        <dbReference type="SAM" id="MobiDB-lite"/>
    </source>
</evidence>
<evidence type="ECO:0000269" key="3">
    <source>
    </source>
</evidence>
<evidence type="ECO:0000303" key="4">
    <source>
    </source>
</evidence>
<evidence type="ECO:0000305" key="5"/>
<comment type="function">
    <text evidence="3">Glycerophosphocholine acyltransferase (GPCAT) that utilizes acyl-CoA to acylate glycero-3-phosphocholine (GPC), forming lysophosphatidylcholine (LPC) (PubMed:27758859). Shows broad acyl specificities with a preference for 16:0-CoA, polyunsaturated acyl-CoA, and the hydroxylated ricinoleoyl-CoA (PubMed:27758859). Also catalyzes the acylation of glycero-3-phosphoethanolamine (GPE) with acyl-CoA (PubMed:27758859). In addition to acyl-CoA, GPCAT efficiently utilizes LPC and lysophosphatidylethanolamine (LPE) as acyl donors in the acylation of GPC (PubMed:27758859). Contributes to the maintenance of phosphatidylcholine (PC) homeostasis and might also have specific functions in acyl editing of PC, such as transferring acyl groups modified at the sn-2 position of PC to the sn-1 (PubMed:27758859).</text>
</comment>
<comment type="catalytic activity">
    <reaction evidence="3">
        <text>sn-glycerol 3-phosphocholine + an acyl-CoA = a monoacyl-sn-glycero-3-phosphocholine + CoA</text>
        <dbReference type="Rhea" id="RHEA:58460"/>
        <dbReference type="ChEBI" id="CHEBI:16870"/>
        <dbReference type="ChEBI" id="CHEBI:57287"/>
        <dbReference type="ChEBI" id="CHEBI:58342"/>
        <dbReference type="ChEBI" id="CHEBI:84465"/>
    </reaction>
    <physiologicalReaction direction="left-to-right" evidence="3">
        <dbReference type="Rhea" id="RHEA:58461"/>
    </physiologicalReaction>
</comment>
<comment type="catalytic activity">
    <reaction evidence="3">
        <text>sn-glycero-3-phosphoethanolamine + an acyl-CoA = a monoacyl-sn-glycero-3-phosphoethanolamine + CoA</text>
        <dbReference type="Rhea" id="RHEA:62108"/>
        <dbReference type="ChEBI" id="CHEBI:57287"/>
        <dbReference type="ChEBI" id="CHEBI:58342"/>
        <dbReference type="ChEBI" id="CHEBI:67274"/>
        <dbReference type="ChEBI" id="CHEBI:143890"/>
    </reaction>
    <physiologicalReaction direction="left-to-right" evidence="3">
        <dbReference type="Rhea" id="RHEA:62109"/>
    </physiologicalReaction>
</comment>
<comment type="catalytic activity">
    <reaction evidence="3">
        <text>sn-glycerol 3-phosphocholine + hexadecanoyl-CoA = hexadecanoyl-sn-glycero-3-phosphocholine + CoA</text>
        <dbReference type="Rhea" id="RHEA:56148"/>
        <dbReference type="ChEBI" id="CHEBI:16870"/>
        <dbReference type="ChEBI" id="CHEBI:57287"/>
        <dbReference type="ChEBI" id="CHEBI:57379"/>
        <dbReference type="ChEBI" id="CHEBI:64563"/>
    </reaction>
    <physiologicalReaction direction="left-to-right" evidence="3">
        <dbReference type="Rhea" id="RHEA:56149"/>
    </physiologicalReaction>
</comment>
<comment type="catalytic activity">
    <reaction evidence="3">
        <text>(9Z)-hexadecenoyl-CoA + sn-glycerol 3-phosphocholine = (9Z-hexadecenoyl)-sn-glycero-3-phosphocholine + CoA</text>
        <dbReference type="Rhea" id="RHEA:56228"/>
        <dbReference type="ChEBI" id="CHEBI:16870"/>
        <dbReference type="ChEBI" id="CHEBI:57287"/>
        <dbReference type="ChEBI" id="CHEBI:61540"/>
        <dbReference type="ChEBI" id="CHEBI:140432"/>
    </reaction>
    <physiologicalReaction direction="left-to-right" evidence="3">
        <dbReference type="Rhea" id="RHEA:56229"/>
    </physiologicalReaction>
</comment>
<comment type="catalytic activity">
    <reaction evidence="3">
        <text>(9Z,12Z)-octadecadienoyl-CoA + sn-glycerol 3-phosphocholine = (9Z,12Z-octadecadienoyl)-sn-glycero-3-phosphocholine + CoA</text>
        <dbReference type="Rhea" id="RHEA:56152"/>
        <dbReference type="ChEBI" id="CHEBI:16870"/>
        <dbReference type="ChEBI" id="CHEBI:57287"/>
        <dbReference type="ChEBI" id="CHEBI:57383"/>
        <dbReference type="ChEBI" id="CHEBI:140444"/>
    </reaction>
    <physiologicalReaction direction="left-to-right" evidence="3">
        <dbReference type="Rhea" id="RHEA:56153"/>
    </physiologicalReaction>
</comment>
<comment type="catalytic activity">
    <reaction evidence="3">
        <text>(12R)-hydroxy-(9Z)-octadecenoyl-CoA + sn-glycerol 3-phosphocholine = (12R-hydroxy-9Z-octadecenoyl)-sn-glycero-3-phosphocholine + CoA</text>
        <dbReference type="Rhea" id="RHEA:56156"/>
        <dbReference type="ChEBI" id="CHEBI:16870"/>
        <dbReference type="ChEBI" id="CHEBI:57287"/>
        <dbReference type="ChEBI" id="CHEBI:139559"/>
        <dbReference type="ChEBI" id="CHEBI:140446"/>
    </reaction>
    <physiologicalReaction direction="left-to-right" evidence="3">
        <dbReference type="Rhea" id="RHEA:56157"/>
    </physiologicalReaction>
</comment>
<comment type="catalytic activity">
    <reaction evidence="3">
        <text>(9Z,12Z,15Z)-octadecatrienoyl-CoA + sn-glycerol 3-phosphocholine = (9Z,12Z,15Z-octadecatrienoyl)-sn-glycero-3-phosphocholine + CoA</text>
        <dbReference type="Rhea" id="RHEA:56164"/>
        <dbReference type="ChEBI" id="CHEBI:16870"/>
        <dbReference type="ChEBI" id="CHEBI:57287"/>
        <dbReference type="ChEBI" id="CHEBI:74034"/>
        <dbReference type="ChEBI" id="CHEBI:140445"/>
    </reaction>
    <physiologicalReaction direction="left-to-right" evidence="3">
        <dbReference type="Rhea" id="RHEA:56165"/>
    </physiologicalReaction>
</comment>
<comment type="catalytic activity">
    <reaction evidence="3">
        <text>sn-glycerol 3-phosphocholine + (9Z)-octadecenoyl-CoA = (9Z-octadecenoyl)-sn-glycero-3-phosphocholine + CoA</text>
        <dbReference type="Rhea" id="RHEA:56168"/>
        <dbReference type="ChEBI" id="CHEBI:16870"/>
        <dbReference type="ChEBI" id="CHEBI:57287"/>
        <dbReference type="ChEBI" id="CHEBI:57387"/>
        <dbReference type="ChEBI" id="CHEBI:76083"/>
    </reaction>
    <physiologicalReaction direction="left-to-right" evidence="3">
        <dbReference type="Rhea" id="RHEA:56169"/>
    </physiologicalReaction>
</comment>
<comment type="subcellular location">
    <subcellularLocation>
        <location evidence="1">Membrane</location>
        <topology evidence="1">Multi-pass membrane protein</topology>
    </subcellularLocation>
</comment>
<comment type="similarity">
    <text evidence="5">Belongs to the GPC1 family.</text>
</comment>
<reference key="1">
    <citation type="journal article" date="2010" name="Nat. Biotechnol.">
        <title>Draft genome sequence of the oilseed species Ricinus communis.</title>
        <authorList>
            <person name="Chan A.P."/>
            <person name="Crabtree J."/>
            <person name="Zhao Q."/>
            <person name="Lorenzi H."/>
            <person name="Orvis J."/>
            <person name="Puiu D."/>
            <person name="Melake-Berhan A."/>
            <person name="Jones K.M."/>
            <person name="Redman J."/>
            <person name="Chen G."/>
            <person name="Cahoon E.B."/>
            <person name="Gedil M."/>
            <person name="Stanke M."/>
            <person name="Haas B.J."/>
            <person name="Wortman J.R."/>
            <person name="Fraser-Liggett C.M."/>
            <person name="Ravel J."/>
            <person name="Rabinowicz P.D."/>
        </authorList>
    </citation>
    <scope>NUCLEOTIDE SEQUENCE [LARGE SCALE GENOMIC DNA]</scope>
    <source>
        <strain>cv. Hale</strain>
    </source>
</reference>
<reference key="2">
    <citation type="journal article" date="2016" name="J. Biol. Chem.">
        <title>Cloning of glycerophosphocholine acyltransferase (GPCAT) from fungi and plants: a novel enzyme in phosphatidylcholine synthesis.</title>
        <authorList>
            <person name="Glab B."/>
            <person name="Beganovic M."/>
            <person name="Anaokar S."/>
            <person name="Hao M.S."/>
            <person name="Rasmusson A.G."/>
            <person name="Patton-Vogt J."/>
            <person name="Banas A."/>
            <person name="Stymne S."/>
            <person name="Lager I."/>
        </authorList>
    </citation>
    <scope>IDENTIFICATION</scope>
    <scope>FUNCTION</scope>
    <scope>CATALYTIC ACTIVITY</scope>
</reference>
<accession>B9RK42</accession>
<sequence>MSNNEDPINEFVSNGDSFEKVKQRLKDRSKKVAQTKEILSKQANQTKEILSKQAVKIAKQAEEHESFINKVTHLLGVLGFGGFCFLLGARPQDIPYVYCLFFFIFVPLRWIYYRFKKWHYFLLDFCYYANTIFLVDLLLYPKDEKLFMVCFSFAEGPLAWALIVWRCSLVFSSVDKIVSVLIHLLPGLVFFTIRWWNPATFEAMHPEGTSGRASWPYVEDKSFLFTWLFLVPLVAYFLWQLLYFLIVNVLRRQRLLRDPEVMTSYRELSKKAQKANNVWWRLSGLLGDQNRMLMYILLQALFTVATTALTVPIFLSYELHAVFQILKVSAAVWNGGSFLLDVMPRQVILKEKKKSELQPAHIQQYHSEPKQDQSPNSMEIRMKTIHSAEEQ</sequence>
<feature type="chain" id="PRO_0000448644" description="Glycerophosphocholine acyltransferase 1">
    <location>
        <begin position="1"/>
        <end position="391"/>
    </location>
</feature>
<feature type="topological domain" description="Cytoplasmic" evidence="5">
    <location>
        <begin position="1"/>
        <end position="66"/>
    </location>
</feature>
<feature type="transmembrane region" description="Helical" evidence="1">
    <location>
        <begin position="67"/>
        <end position="87"/>
    </location>
</feature>
<feature type="topological domain" description="Lumenal" evidence="5">
    <location>
        <begin position="88"/>
        <end position="92"/>
    </location>
</feature>
<feature type="transmembrane region" description="Helical" evidence="1">
    <location>
        <begin position="93"/>
        <end position="113"/>
    </location>
</feature>
<feature type="topological domain" description="Cytoplasmic" evidence="5">
    <location>
        <begin position="114"/>
        <end position="119"/>
    </location>
</feature>
<feature type="transmembrane region" description="Helical" evidence="1">
    <location>
        <begin position="120"/>
        <end position="140"/>
    </location>
</feature>
<feature type="topological domain" description="Lumenal" evidence="5">
    <location>
        <begin position="141"/>
        <end position="144"/>
    </location>
</feature>
<feature type="transmembrane region" description="Helical" evidence="1">
    <location>
        <begin position="145"/>
        <end position="165"/>
    </location>
</feature>
<feature type="topological domain" description="Cytoplasmic" evidence="5">
    <location>
        <begin position="166"/>
        <end position="172"/>
    </location>
</feature>
<feature type="transmembrane region" description="Helical" evidence="1">
    <location>
        <begin position="173"/>
        <end position="193"/>
    </location>
</feature>
<feature type="topological domain" description="Lumenal" evidence="5">
    <location>
        <begin position="194"/>
        <end position="226"/>
    </location>
</feature>
<feature type="transmembrane region" description="Helical" evidence="1">
    <location>
        <begin position="227"/>
        <end position="247"/>
    </location>
</feature>
<feature type="topological domain" description="Cytoplasmic" evidence="5">
    <location>
        <begin position="248"/>
        <end position="294"/>
    </location>
</feature>
<feature type="transmembrane region" description="Helical" evidence="1">
    <location>
        <begin position="295"/>
        <end position="315"/>
    </location>
</feature>
<feature type="topological domain" description="Lumenal" evidence="5">
    <location>
        <begin position="316"/>
        <end position="318"/>
    </location>
</feature>
<feature type="transmembrane region" description="Helical" evidence="1">
    <location>
        <begin position="319"/>
        <end position="339"/>
    </location>
</feature>
<feature type="topological domain" description="Cytoplasmic" evidence="5">
    <location>
        <begin position="340"/>
        <end position="391"/>
    </location>
</feature>
<feature type="region of interest" description="Disordered" evidence="2">
    <location>
        <begin position="354"/>
        <end position="391"/>
    </location>
</feature>
<feature type="compositionally biased region" description="Basic and acidic residues" evidence="2">
    <location>
        <begin position="380"/>
        <end position="391"/>
    </location>
</feature>
<organism>
    <name type="scientific">Ricinus communis</name>
    <name type="common">Castor bean</name>
    <dbReference type="NCBI Taxonomy" id="3988"/>
    <lineage>
        <taxon>Eukaryota</taxon>
        <taxon>Viridiplantae</taxon>
        <taxon>Streptophyta</taxon>
        <taxon>Embryophyta</taxon>
        <taxon>Tracheophyta</taxon>
        <taxon>Spermatophyta</taxon>
        <taxon>Magnoliopsida</taxon>
        <taxon>eudicotyledons</taxon>
        <taxon>Gunneridae</taxon>
        <taxon>Pentapetalae</taxon>
        <taxon>rosids</taxon>
        <taxon>fabids</taxon>
        <taxon>Malpighiales</taxon>
        <taxon>Euphorbiaceae</taxon>
        <taxon>Acalyphoideae</taxon>
        <taxon>Acalypheae</taxon>
        <taxon>Ricinus</taxon>
    </lineage>
</organism>
<gene>
    <name evidence="4" type="primary">GPC1</name>
    <name type="ORF">RCOM_1046270</name>
</gene>
<protein>
    <recommendedName>
        <fullName evidence="4">Glycerophosphocholine acyltransferase 1</fullName>
        <shortName evidence="4">GPCAT</shortName>
        <ecNumber evidence="3">2.3.1.-</ecNumber>
    </recommendedName>
</protein>
<proteinExistence type="evidence at protein level"/>
<keyword id="KW-0012">Acyltransferase</keyword>
<keyword id="KW-0444">Lipid biosynthesis</keyword>
<keyword id="KW-0443">Lipid metabolism</keyword>
<keyword id="KW-0472">Membrane</keyword>
<keyword id="KW-0594">Phospholipid biosynthesis</keyword>
<keyword id="KW-1208">Phospholipid metabolism</keyword>
<keyword id="KW-1185">Reference proteome</keyword>
<keyword id="KW-0808">Transferase</keyword>
<keyword id="KW-0812">Transmembrane</keyword>
<keyword id="KW-1133">Transmembrane helix</keyword>